<comment type="function">
    <text evidence="1">Forms part of the ribosomal stalk which helps the ribosome interact with GTP-bound translation factors. Is thus essential for accurate translation.</text>
</comment>
<comment type="subunit">
    <text evidence="1">Homodimer. Part of the ribosomal stalk of the 50S ribosomal subunit. Forms a multimeric L10(L12)X complex, where L10 forms an elongated spine to which 2 to 4 L12 dimers bind in a sequential fashion. Binds GTP-bound translation factors.</text>
</comment>
<comment type="similarity">
    <text evidence="1">Belongs to the bacterial ribosomal protein bL12 family.</text>
</comment>
<accession>Q9CK90</accession>
<gene>
    <name evidence="1" type="primary">rplL</name>
    <name evidence="1" type="synonym">rpl12</name>
    <name type="ordered locus">PM1738</name>
</gene>
<dbReference type="EMBL" id="AE004439">
    <property type="protein sequence ID" value="AAK03822.1"/>
    <property type="molecule type" value="Genomic_DNA"/>
</dbReference>
<dbReference type="RefSeq" id="WP_005724690.1">
    <property type="nucleotide sequence ID" value="NC_002663.1"/>
</dbReference>
<dbReference type="SMR" id="Q9CK90"/>
<dbReference type="STRING" id="272843.PM1738"/>
<dbReference type="EnsemblBacteria" id="AAK03822">
    <property type="protein sequence ID" value="AAK03822"/>
    <property type="gene ID" value="PM1738"/>
</dbReference>
<dbReference type="GeneID" id="77206668"/>
<dbReference type="KEGG" id="pmu:PM1738"/>
<dbReference type="HOGENOM" id="CLU_086499_3_2_6"/>
<dbReference type="OrthoDB" id="9811748at2"/>
<dbReference type="Proteomes" id="UP000000809">
    <property type="component" value="Chromosome"/>
</dbReference>
<dbReference type="GO" id="GO:0022625">
    <property type="term" value="C:cytosolic large ribosomal subunit"/>
    <property type="evidence" value="ECO:0007669"/>
    <property type="project" value="TreeGrafter"/>
</dbReference>
<dbReference type="GO" id="GO:0003729">
    <property type="term" value="F:mRNA binding"/>
    <property type="evidence" value="ECO:0007669"/>
    <property type="project" value="TreeGrafter"/>
</dbReference>
<dbReference type="GO" id="GO:0003735">
    <property type="term" value="F:structural constituent of ribosome"/>
    <property type="evidence" value="ECO:0007669"/>
    <property type="project" value="InterPro"/>
</dbReference>
<dbReference type="GO" id="GO:0006412">
    <property type="term" value="P:translation"/>
    <property type="evidence" value="ECO:0007669"/>
    <property type="project" value="UniProtKB-UniRule"/>
</dbReference>
<dbReference type="CDD" id="cd00387">
    <property type="entry name" value="Ribosomal_L7_L12"/>
    <property type="match status" value="1"/>
</dbReference>
<dbReference type="FunFam" id="3.30.1390.10:FF:000001">
    <property type="entry name" value="50S ribosomal protein L7/L12"/>
    <property type="match status" value="1"/>
</dbReference>
<dbReference type="Gene3D" id="3.30.1390.10">
    <property type="match status" value="1"/>
</dbReference>
<dbReference type="Gene3D" id="1.20.5.710">
    <property type="entry name" value="Single helix bin"/>
    <property type="match status" value="1"/>
</dbReference>
<dbReference type="HAMAP" id="MF_00368">
    <property type="entry name" value="Ribosomal_bL12"/>
    <property type="match status" value="1"/>
</dbReference>
<dbReference type="InterPro" id="IPR000206">
    <property type="entry name" value="Ribosomal_bL12"/>
</dbReference>
<dbReference type="InterPro" id="IPR013823">
    <property type="entry name" value="Ribosomal_bL12_C"/>
</dbReference>
<dbReference type="InterPro" id="IPR014719">
    <property type="entry name" value="Ribosomal_bL12_C/ClpS-like"/>
</dbReference>
<dbReference type="InterPro" id="IPR008932">
    <property type="entry name" value="Ribosomal_bL12_oligo"/>
</dbReference>
<dbReference type="InterPro" id="IPR036235">
    <property type="entry name" value="Ribosomal_bL12_oligo_N_sf"/>
</dbReference>
<dbReference type="NCBIfam" id="TIGR00855">
    <property type="entry name" value="L12"/>
    <property type="match status" value="1"/>
</dbReference>
<dbReference type="PANTHER" id="PTHR45987">
    <property type="entry name" value="39S RIBOSOMAL PROTEIN L12"/>
    <property type="match status" value="1"/>
</dbReference>
<dbReference type="PANTHER" id="PTHR45987:SF4">
    <property type="entry name" value="LARGE RIBOSOMAL SUBUNIT PROTEIN BL12M"/>
    <property type="match status" value="1"/>
</dbReference>
<dbReference type="Pfam" id="PF00542">
    <property type="entry name" value="Ribosomal_L12"/>
    <property type="match status" value="1"/>
</dbReference>
<dbReference type="Pfam" id="PF16320">
    <property type="entry name" value="Ribosomal_L12_N"/>
    <property type="match status" value="1"/>
</dbReference>
<dbReference type="SUPFAM" id="SSF54736">
    <property type="entry name" value="ClpS-like"/>
    <property type="match status" value="1"/>
</dbReference>
<dbReference type="SUPFAM" id="SSF48300">
    <property type="entry name" value="Ribosomal protein L7/12, oligomerisation (N-terminal) domain"/>
    <property type="match status" value="1"/>
</dbReference>
<sequence>MSLTNEQIIEAIASKSVTEIVELIAAMEEKFGVSAAAAAVAVAAGPAEAAEEKTEFDVVLAGAGANKVAVIKAVRGATGLGLKEAKDLVESAPAVLKEGISKAEAEALKKELEEAGAQVEVK</sequence>
<name>RL7_PASMU</name>
<proteinExistence type="inferred from homology"/>
<evidence type="ECO:0000255" key="1">
    <source>
        <dbReference type="HAMAP-Rule" id="MF_00368"/>
    </source>
</evidence>
<evidence type="ECO:0000305" key="2"/>
<keyword id="KW-1185">Reference proteome</keyword>
<keyword id="KW-0687">Ribonucleoprotein</keyword>
<keyword id="KW-0689">Ribosomal protein</keyword>
<reference key="1">
    <citation type="journal article" date="2001" name="Proc. Natl. Acad. Sci. U.S.A.">
        <title>Complete genomic sequence of Pasteurella multocida Pm70.</title>
        <authorList>
            <person name="May B.J."/>
            <person name="Zhang Q."/>
            <person name="Li L.L."/>
            <person name="Paustian M.L."/>
            <person name="Whittam T.S."/>
            <person name="Kapur V."/>
        </authorList>
    </citation>
    <scope>NUCLEOTIDE SEQUENCE [LARGE SCALE GENOMIC DNA]</scope>
    <source>
        <strain>Pm70</strain>
    </source>
</reference>
<protein>
    <recommendedName>
        <fullName evidence="1">Large ribosomal subunit protein bL12</fullName>
    </recommendedName>
    <alternativeName>
        <fullName evidence="2">50S ribosomal protein L7/L12</fullName>
    </alternativeName>
</protein>
<feature type="chain" id="PRO_0000157560" description="Large ribosomal subunit protein bL12">
    <location>
        <begin position="1"/>
        <end position="122"/>
    </location>
</feature>
<organism>
    <name type="scientific">Pasteurella multocida (strain Pm70)</name>
    <dbReference type="NCBI Taxonomy" id="272843"/>
    <lineage>
        <taxon>Bacteria</taxon>
        <taxon>Pseudomonadati</taxon>
        <taxon>Pseudomonadota</taxon>
        <taxon>Gammaproteobacteria</taxon>
        <taxon>Pasteurellales</taxon>
        <taxon>Pasteurellaceae</taxon>
        <taxon>Pasteurella</taxon>
    </lineage>
</organism>